<keyword id="KW-0030">Aminoacyl-tRNA synthetase</keyword>
<keyword id="KW-0067">ATP-binding</keyword>
<keyword id="KW-0963">Cytoplasm</keyword>
<keyword id="KW-0436">Ligase</keyword>
<keyword id="KW-0479">Metal-binding</keyword>
<keyword id="KW-0547">Nucleotide-binding</keyword>
<keyword id="KW-0648">Protein biosynthesis</keyword>
<keyword id="KW-1185">Reference proteome</keyword>
<keyword id="KW-0694">RNA-binding</keyword>
<keyword id="KW-0820">tRNA-binding</keyword>
<keyword id="KW-0862">Zinc</keyword>
<sequence length="884" mass="94347">MTSTNDIRRSFLDYFGGAGHHIEPSAPLVPYNDPTLMFVNAGMVPFKNVFTGLEKRPYSTAASSQKCVRAGGKHNDLDNVGYTARHHTFFEMLGNFSFGDYFKEQAIHHAWTLITQTWGLAPEKLTATVYHTDDEAFDLWKKIAGLPDERIIRIPTSDNFWSMGDTGPCGPCSEIFYDHGDHVRGGPPGSPEEDGDRFVEIWNLVFMQYEQLPGGERVDLPRPSIDTGMGLERVAAVLQGVHDNYDTDTFKALIEASVELTGVRADEAHRASHRVIADHLRASSFLVADGVLPSNEGRGYVLRRIMRRAMRHAHLLGAKDPLMHRLLPSLTAEMGAAYPELIRAQPLIAETLEREEVKFRQTLDKGLRLLDEATADMGRGDTLVGDVAFKLYDTYGFPYDLTEDALRSKGISVDRAGFDAAMAQQKAAARAAWKGSGQKASEEIWFDLAETHGSTEFTGYTSTSGEATVIALVRDGQPVEEARAGDEVIVLTNQTPFYGESGGQMGDAGMIATLEGAKASVSDTGKPLGRLHTHQAKLEAGTLKVGDTVQLTVDAERRDRIRANHSATHLLHAALRNRLGGHVTQKGSLVAADRFRFDFSHPKALTAAEIADIEADVNAQIRGNEPVTTRLMTPDDAIAAGALALFGEKYGDEVRVLAMGKADDRNYSVELCGGTHVRALGDIALFKIVSESAVSSGVRRIEALTGEAARQWLNGRDEALKAAAAALKTSPDEVPARVAQLAEQLKKAERELADAKKALALGGSGGDGGAAAGPAVEQVGDVAFLAQVVDGLDPKELRGTVDGLKKQVGSGVAMLVAVNDGRASVAVGVTDDKTGHHSAVDLVKAAVVALGGQGGGGRPDMAQGGGPNGGAANDAVAAVKAALA</sequence>
<feature type="chain" id="PRO_0000347807" description="Alanine--tRNA ligase">
    <location>
        <begin position="1"/>
        <end position="884"/>
    </location>
</feature>
<feature type="binding site" evidence="1">
    <location>
        <position position="565"/>
    </location>
    <ligand>
        <name>Zn(2+)</name>
        <dbReference type="ChEBI" id="CHEBI:29105"/>
    </ligand>
</feature>
<feature type="binding site" evidence="1">
    <location>
        <position position="569"/>
    </location>
    <ligand>
        <name>Zn(2+)</name>
        <dbReference type="ChEBI" id="CHEBI:29105"/>
    </ligand>
</feature>
<feature type="binding site" evidence="1">
    <location>
        <position position="672"/>
    </location>
    <ligand>
        <name>Zn(2+)</name>
        <dbReference type="ChEBI" id="CHEBI:29105"/>
    </ligand>
</feature>
<feature type="binding site" evidence="1">
    <location>
        <position position="676"/>
    </location>
    <ligand>
        <name>Zn(2+)</name>
        <dbReference type="ChEBI" id="CHEBI:29105"/>
    </ligand>
</feature>
<dbReference type="EC" id="6.1.1.7" evidence="1"/>
<dbReference type="EMBL" id="CP000356">
    <property type="protein sequence ID" value="ABF53433.1"/>
    <property type="molecule type" value="Genomic_DNA"/>
</dbReference>
<dbReference type="RefSeq" id="WP_011542013.1">
    <property type="nucleotide sequence ID" value="NC_008048.1"/>
</dbReference>
<dbReference type="SMR" id="Q1GSD9"/>
<dbReference type="STRING" id="317655.Sala_1720"/>
<dbReference type="KEGG" id="sal:Sala_1720"/>
<dbReference type="eggNOG" id="COG0013">
    <property type="taxonomic scope" value="Bacteria"/>
</dbReference>
<dbReference type="HOGENOM" id="CLU_004485_1_1_5"/>
<dbReference type="OrthoDB" id="9803884at2"/>
<dbReference type="Proteomes" id="UP000006578">
    <property type="component" value="Chromosome"/>
</dbReference>
<dbReference type="GO" id="GO:0005829">
    <property type="term" value="C:cytosol"/>
    <property type="evidence" value="ECO:0007669"/>
    <property type="project" value="TreeGrafter"/>
</dbReference>
<dbReference type="GO" id="GO:0004813">
    <property type="term" value="F:alanine-tRNA ligase activity"/>
    <property type="evidence" value="ECO:0007669"/>
    <property type="project" value="UniProtKB-UniRule"/>
</dbReference>
<dbReference type="GO" id="GO:0002161">
    <property type="term" value="F:aminoacyl-tRNA deacylase activity"/>
    <property type="evidence" value="ECO:0007669"/>
    <property type="project" value="TreeGrafter"/>
</dbReference>
<dbReference type="GO" id="GO:0005524">
    <property type="term" value="F:ATP binding"/>
    <property type="evidence" value="ECO:0007669"/>
    <property type="project" value="UniProtKB-UniRule"/>
</dbReference>
<dbReference type="GO" id="GO:0000049">
    <property type="term" value="F:tRNA binding"/>
    <property type="evidence" value="ECO:0007669"/>
    <property type="project" value="UniProtKB-KW"/>
</dbReference>
<dbReference type="GO" id="GO:0008270">
    <property type="term" value="F:zinc ion binding"/>
    <property type="evidence" value="ECO:0007669"/>
    <property type="project" value="UniProtKB-UniRule"/>
</dbReference>
<dbReference type="GO" id="GO:0006419">
    <property type="term" value="P:alanyl-tRNA aminoacylation"/>
    <property type="evidence" value="ECO:0007669"/>
    <property type="project" value="UniProtKB-UniRule"/>
</dbReference>
<dbReference type="GO" id="GO:0045892">
    <property type="term" value="P:negative regulation of DNA-templated transcription"/>
    <property type="evidence" value="ECO:0007669"/>
    <property type="project" value="TreeGrafter"/>
</dbReference>
<dbReference type="CDD" id="cd00673">
    <property type="entry name" value="AlaRS_core"/>
    <property type="match status" value="1"/>
</dbReference>
<dbReference type="FunFam" id="2.40.30.130:FF:000001">
    <property type="entry name" value="Alanine--tRNA ligase"/>
    <property type="match status" value="1"/>
</dbReference>
<dbReference type="FunFam" id="3.10.310.40:FF:000001">
    <property type="entry name" value="Alanine--tRNA ligase"/>
    <property type="match status" value="1"/>
</dbReference>
<dbReference type="FunFam" id="3.30.54.20:FF:000001">
    <property type="entry name" value="Alanine--tRNA ligase"/>
    <property type="match status" value="1"/>
</dbReference>
<dbReference type="FunFam" id="3.30.930.10:FF:000004">
    <property type="entry name" value="Alanine--tRNA ligase"/>
    <property type="match status" value="1"/>
</dbReference>
<dbReference type="FunFam" id="3.30.980.10:FF:000004">
    <property type="entry name" value="Alanine--tRNA ligase, cytoplasmic"/>
    <property type="match status" value="1"/>
</dbReference>
<dbReference type="Gene3D" id="2.40.30.130">
    <property type="match status" value="1"/>
</dbReference>
<dbReference type="Gene3D" id="3.10.310.40">
    <property type="match status" value="1"/>
</dbReference>
<dbReference type="Gene3D" id="3.30.54.20">
    <property type="match status" value="1"/>
</dbReference>
<dbReference type="Gene3D" id="6.10.250.550">
    <property type="match status" value="1"/>
</dbReference>
<dbReference type="Gene3D" id="3.30.930.10">
    <property type="entry name" value="Bira Bifunctional Protein, Domain 2"/>
    <property type="match status" value="1"/>
</dbReference>
<dbReference type="Gene3D" id="3.30.980.10">
    <property type="entry name" value="Threonyl-trna Synthetase, Chain A, domain 2"/>
    <property type="match status" value="1"/>
</dbReference>
<dbReference type="HAMAP" id="MF_00036_B">
    <property type="entry name" value="Ala_tRNA_synth_B"/>
    <property type="match status" value="1"/>
</dbReference>
<dbReference type="InterPro" id="IPR045864">
    <property type="entry name" value="aa-tRNA-synth_II/BPL/LPL"/>
</dbReference>
<dbReference type="InterPro" id="IPR002318">
    <property type="entry name" value="Ala-tRNA-lgiase_IIc"/>
</dbReference>
<dbReference type="InterPro" id="IPR018162">
    <property type="entry name" value="Ala-tRNA-ligase_IIc_anticod-bd"/>
</dbReference>
<dbReference type="InterPro" id="IPR018165">
    <property type="entry name" value="Ala-tRNA-synth_IIc_core"/>
</dbReference>
<dbReference type="InterPro" id="IPR018164">
    <property type="entry name" value="Ala-tRNA-synth_IIc_N"/>
</dbReference>
<dbReference type="InterPro" id="IPR050058">
    <property type="entry name" value="Ala-tRNA_ligase"/>
</dbReference>
<dbReference type="InterPro" id="IPR023033">
    <property type="entry name" value="Ala_tRNA_ligase_euk/bac"/>
</dbReference>
<dbReference type="InterPro" id="IPR003156">
    <property type="entry name" value="DHHA1_dom"/>
</dbReference>
<dbReference type="InterPro" id="IPR018163">
    <property type="entry name" value="Thr/Ala-tRNA-synth_IIc_edit"/>
</dbReference>
<dbReference type="InterPro" id="IPR009000">
    <property type="entry name" value="Transl_B-barrel_sf"/>
</dbReference>
<dbReference type="InterPro" id="IPR012947">
    <property type="entry name" value="tRNA_SAD"/>
</dbReference>
<dbReference type="NCBIfam" id="TIGR00344">
    <property type="entry name" value="alaS"/>
    <property type="match status" value="1"/>
</dbReference>
<dbReference type="PANTHER" id="PTHR11777:SF9">
    <property type="entry name" value="ALANINE--TRNA LIGASE, CYTOPLASMIC"/>
    <property type="match status" value="1"/>
</dbReference>
<dbReference type="PANTHER" id="PTHR11777">
    <property type="entry name" value="ALANYL-TRNA SYNTHETASE"/>
    <property type="match status" value="1"/>
</dbReference>
<dbReference type="Pfam" id="PF02272">
    <property type="entry name" value="DHHA1"/>
    <property type="match status" value="1"/>
</dbReference>
<dbReference type="Pfam" id="PF01411">
    <property type="entry name" value="tRNA-synt_2c"/>
    <property type="match status" value="1"/>
</dbReference>
<dbReference type="Pfam" id="PF07973">
    <property type="entry name" value="tRNA_SAD"/>
    <property type="match status" value="1"/>
</dbReference>
<dbReference type="PRINTS" id="PR00980">
    <property type="entry name" value="TRNASYNTHALA"/>
</dbReference>
<dbReference type="SMART" id="SM00863">
    <property type="entry name" value="tRNA_SAD"/>
    <property type="match status" value="1"/>
</dbReference>
<dbReference type="SUPFAM" id="SSF55681">
    <property type="entry name" value="Class II aaRS and biotin synthetases"/>
    <property type="match status" value="1"/>
</dbReference>
<dbReference type="SUPFAM" id="SSF101353">
    <property type="entry name" value="Putative anticodon-binding domain of alanyl-tRNA synthetase (AlaRS)"/>
    <property type="match status" value="1"/>
</dbReference>
<dbReference type="SUPFAM" id="SSF55186">
    <property type="entry name" value="ThrRS/AlaRS common domain"/>
    <property type="match status" value="1"/>
</dbReference>
<dbReference type="SUPFAM" id="SSF50447">
    <property type="entry name" value="Translation proteins"/>
    <property type="match status" value="1"/>
</dbReference>
<dbReference type="PROSITE" id="PS50860">
    <property type="entry name" value="AA_TRNA_LIGASE_II_ALA"/>
    <property type="match status" value="1"/>
</dbReference>
<accession>Q1GSD9</accession>
<reference key="1">
    <citation type="journal article" date="2009" name="Proc. Natl. Acad. Sci. U.S.A.">
        <title>The genomic basis of trophic strategy in marine bacteria.</title>
        <authorList>
            <person name="Lauro F.M."/>
            <person name="McDougald D."/>
            <person name="Thomas T."/>
            <person name="Williams T.J."/>
            <person name="Egan S."/>
            <person name="Rice S."/>
            <person name="DeMaere M.Z."/>
            <person name="Ting L."/>
            <person name="Ertan H."/>
            <person name="Johnson J."/>
            <person name="Ferriera S."/>
            <person name="Lapidus A."/>
            <person name="Anderson I."/>
            <person name="Kyrpides N."/>
            <person name="Munk A.C."/>
            <person name="Detter C."/>
            <person name="Han C.S."/>
            <person name="Brown M.V."/>
            <person name="Robb F.T."/>
            <person name="Kjelleberg S."/>
            <person name="Cavicchioli R."/>
        </authorList>
    </citation>
    <scope>NUCLEOTIDE SEQUENCE [LARGE SCALE GENOMIC DNA]</scope>
    <source>
        <strain>DSM 13593 / LMG 18877 / RB2256</strain>
    </source>
</reference>
<name>SYA_SPHAL</name>
<protein>
    <recommendedName>
        <fullName evidence="1">Alanine--tRNA ligase</fullName>
        <ecNumber evidence="1">6.1.1.7</ecNumber>
    </recommendedName>
    <alternativeName>
        <fullName evidence="1">Alanyl-tRNA synthetase</fullName>
        <shortName evidence="1">AlaRS</shortName>
    </alternativeName>
</protein>
<comment type="function">
    <text evidence="1">Catalyzes the attachment of alanine to tRNA(Ala) in a two-step reaction: alanine is first activated by ATP to form Ala-AMP and then transferred to the acceptor end of tRNA(Ala). Also edits incorrectly charged Ser-tRNA(Ala) and Gly-tRNA(Ala) via its editing domain.</text>
</comment>
<comment type="catalytic activity">
    <reaction evidence="1">
        <text>tRNA(Ala) + L-alanine + ATP = L-alanyl-tRNA(Ala) + AMP + diphosphate</text>
        <dbReference type="Rhea" id="RHEA:12540"/>
        <dbReference type="Rhea" id="RHEA-COMP:9657"/>
        <dbReference type="Rhea" id="RHEA-COMP:9923"/>
        <dbReference type="ChEBI" id="CHEBI:30616"/>
        <dbReference type="ChEBI" id="CHEBI:33019"/>
        <dbReference type="ChEBI" id="CHEBI:57972"/>
        <dbReference type="ChEBI" id="CHEBI:78442"/>
        <dbReference type="ChEBI" id="CHEBI:78497"/>
        <dbReference type="ChEBI" id="CHEBI:456215"/>
        <dbReference type="EC" id="6.1.1.7"/>
    </reaction>
</comment>
<comment type="cofactor">
    <cofactor evidence="1">
        <name>Zn(2+)</name>
        <dbReference type="ChEBI" id="CHEBI:29105"/>
    </cofactor>
    <text evidence="1">Binds 1 zinc ion per subunit.</text>
</comment>
<comment type="subcellular location">
    <subcellularLocation>
        <location evidence="1">Cytoplasm</location>
    </subcellularLocation>
</comment>
<comment type="domain">
    <text evidence="1">Consists of three domains; the N-terminal catalytic domain, the editing domain and the C-terminal C-Ala domain. The editing domain removes incorrectly charged amino acids, while the C-Ala domain, along with tRNA(Ala), serves as a bridge to cooperatively bring together the editing and aminoacylation centers thus stimulating deacylation of misacylated tRNAs.</text>
</comment>
<comment type="similarity">
    <text evidence="1">Belongs to the class-II aminoacyl-tRNA synthetase family.</text>
</comment>
<evidence type="ECO:0000255" key="1">
    <source>
        <dbReference type="HAMAP-Rule" id="MF_00036"/>
    </source>
</evidence>
<proteinExistence type="inferred from homology"/>
<organism>
    <name type="scientific">Sphingopyxis alaskensis (strain DSM 13593 / LMG 18877 / RB2256)</name>
    <name type="common">Sphingomonas alaskensis</name>
    <dbReference type="NCBI Taxonomy" id="317655"/>
    <lineage>
        <taxon>Bacteria</taxon>
        <taxon>Pseudomonadati</taxon>
        <taxon>Pseudomonadota</taxon>
        <taxon>Alphaproteobacteria</taxon>
        <taxon>Sphingomonadales</taxon>
        <taxon>Sphingomonadaceae</taxon>
        <taxon>Sphingopyxis</taxon>
    </lineage>
</organism>
<gene>
    <name evidence="1" type="primary">alaS</name>
    <name type="ordered locus">Sala_1720</name>
</gene>